<dbReference type="EC" id="7.1.2.2" evidence="1"/>
<dbReference type="EMBL" id="AE017354">
    <property type="protein sequence ID" value="AAU29027.1"/>
    <property type="molecule type" value="Genomic_DNA"/>
</dbReference>
<dbReference type="RefSeq" id="WP_010948666.1">
    <property type="nucleotide sequence ID" value="NC_002942.5"/>
</dbReference>
<dbReference type="RefSeq" id="YP_096974.1">
    <property type="nucleotide sequence ID" value="NC_002942.5"/>
</dbReference>
<dbReference type="SMR" id="Q5ZRA1"/>
<dbReference type="STRING" id="272624.lpg2982"/>
<dbReference type="PaxDb" id="272624-lpg2982"/>
<dbReference type="GeneID" id="57036988"/>
<dbReference type="KEGG" id="lpn:lpg2982"/>
<dbReference type="PATRIC" id="fig|272624.6.peg.3188"/>
<dbReference type="eggNOG" id="COG0055">
    <property type="taxonomic scope" value="Bacteria"/>
</dbReference>
<dbReference type="HOGENOM" id="CLU_022398_0_2_6"/>
<dbReference type="OrthoDB" id="9801639at2"/>
<dbReference type="Proteomes" id="UP000000609">
    <property type="component" value="Chromosome"/>
</dbReference>
<dbReference type="GO" id="GO:0005886">
    <property type="term" value="C:plasma membrane"/>
    <property type="evidence" value="ECO:0007669"/>
    <property type="project" value="UniProtKB-SubCell"/>
</dbReference>
<dbReference type="GO" id="GO:0045259">
    <property type="term" value="C:proton-transporting ATP synthase complex"/>
    <property type="evidence" value="ECO:0007669"/>
    <property type="project" value="UniProtKB-KW"/>
</dbReference>
<dbReference type="GO" id="GO:0005524">
    <property type="term" value="F:ATP binding"/>
    <property type="evidence" value="ECO:0007669"/>
    <property type="project" value="UniProtKB-UniRule"/>
</dbReference>
<dbReference type="GO" id="GO:0016887">
    <property type="term" value="F:ATP hydrolysis activity"/>
    <property type="evidence" value="ECO:0007669"/>
    <property type="project" value="InterPro"/>
</dbReference>
<dbReference type="GO" id="GO:0046933">
    <property type="term" value="F:proton-transporting ATP synthase activity, rotational mechanism"/>
    <property type="evidence" value="ECO:0007669"/>
    <property type="project" value="UniProtKB-UniRule"/>
</dbReference>
<dbReference type="CDD" id="cd18110">
    <property type="entry name" value="ATP-synt_F1_beta_C"/>
    <property type="match status" value="1"/>
</dbReference>
<dbReference type="CDD" id="cd18115">
    <property type="entry name" value="ATP-synt_F1_beta_N"/>
    <property type="match status" value="1"/>
</dbReference>
<dbReference type="CDD" id="cd01133">
    <property type="entry name" value="F1-ATPase_beta_CD"/>
    <property type="match status" value="1"/>
</dbReference>
<dbReference type="FunFam" id="1.10.1140.10:FF:000001">
    <property type="entry name" value="ATP synthase subunit beta"/>
    <property type="match status" value="1"/>
</dbReference>
<dbReference type="FunFam" id="3.40.50.300:FF:000004">
    <property type="entry name" value="ATP synthase subunit beta"/>
    <property type="match status" value="1"/>
</dbReference>
<dbReference type="Gene3D" id="2.40.10.170">
    <property type="match status" value="1"/>
</dbReference>
<dbReference type="Gene3D" id="1.10.1140.10">
    <property type="entry name" value="Bovine Mitochondrial F1-atpase, Atp Synthase Beta Chain, Chain D, domain 3"/>
    <property type="match status" value="1"/>
</dbReference>
<dbReference type="Gene3D" id="3.40.50.300">
    <property type="entry name" value="P-loop containing nucleotide triphosphate hydrolases"/>
    <property type="match status" value="1"/>
</dbReference>
<dbReference type="HAMAP" id="MF_01347">
    <property type="entry name" value="ATP_synth_beta_bact"/>
    <property type="match status" value="1"/>
</dbReference>
<dbReference type="InterPro" id="IPR003593">
    <property type="entry name" value="AAA+_ATPase"/>
</dbReference>
<dbReference type="InterPro" id="IPR055190">
    <property type="entry name" value="ATP-synt_VA_C"/>
</dbReference>
<dbReference type="InterPro" id="IPR005722">
    <property type="entry name" value="ATP_synth_F1_bsu"/>
</dbReference>
<dbReference type="InterPro" id="IPR020003">
    <property type="entry name" value="ATPase_a/bsu_AS"/>
</dbReference>
<dbReference type="InterPro" id="IPR050053">
    <property type="entry name" value="ATPase_alpha/beta_chains"/>
</dbReference>
<dbReference type="InterPro" id="IPR004100">
    <property type="entry name" value="ATPase_F1/V1/A1_a/bsu_N"/>
</dbReference>
<dbReference type="InterPro" id="IPR036121">
    <property type="entry name" value="ATPase_F1/V1/A1_a/bsu_N_sf"/>
</dbReference>
<dbReference type="InterPro" id="IPR000194">
    <property type="entry name" value="ATPase_F1/V1/A1_a/bsu_nucl-bd"/>
</dbReference>
<dbReference type="InterPro" id="IPR024034">
    <property type="entry name" value="ATPase_F1/V1_b/a_C"/>
</dbReference>
<dbReference type="InterPro" id="IPR027417">
    <property type="entry name" value="P-loop_NTPase"/>
</dbReference>
<dbReference type="NCBIfam" id="TIGR01039">
    <property type="entry name" value="atpD"/>
    <property type="match status" value="1"/>
</dbReference>
<dbReference type="PANTHER" id="PTHR15184">
    <property type="entry name" value="ATP SYNTHASE"/>
    <property type="match status" value="1"/>
</dbReference>
<dbReference type="PANTHER" id="PTHR15184:SF71">
    <property type="entry name" value="ATP SYNTHASE SUBUNIT BETA, MITOCHONDRIAL"/>
    <property type="match status" value="1"/>
</dbReference>
<dbReference type="Pfam" id="PF00006">
    <property type="entry name" value="ATP-synt_ab"/>
    <property type="match status" value="1"/>
</dbReference>
<dbReference type="Pfam" id="PF02874">
    <property type="entry name" value="ATP-synt_ab_N"/>
    <property type="match status" value="1"/>
</dbReference>
<dbReference type="Pfam" id="PF22919">
    <property type="entry name" value="ATP-synt_VA_C"/>
    <property type="match status" value="1"/>
</dbReference>
<dbReference type="SMART" id="SM00382">
    <property type="entry name" value="AAA"/>
    <property type="match status" value="1"/>
</dbReference>
<dbReference type="SUPFAM" id="SSF47917">
    <property type="entry name" value="C-terminal domain of alpha and beta subunits of F1 ATP synthase"/>
    <property type="match status" value="1"/>
</dbReference>
<dbReference type="SUPFAM" id="SSF50615">
    <property type="entry name" value="N-terminal domain of alpha and beta subunits of F1 ATP synthase"/>
    <property type="match status" value="1"/>
</dbReference>
<dbReference type="SUPFAM" id="SSF52540">
    <property type="entry name" value="P-loop containing nucleoside triphosphate hydrolases"/>
    <property type="match status" value="1"/>
</dbReference>
<dbReference type="PROSITE" id="PS00152">
    <property type="entry name" value="ATPASE_ALPHA_BETA"/>
    <property type="match status" value="1"/>
</dbReference>
<proteinExistence type="inferred from homology"/>
<comment type="function">
    <text evidence="1">Produces ATP from ADP in the presence of a proton gradient across the membrane. The catalytic sites are hosted primarily by the beta subunits.</text>
</comment>
<comment type="catalytic activity">
    <reaction evidence="1">
        <text>ATP + H2O + 4 H(+)(in) = ADP + phosphate + 5 H(+)(out)</text>
        <dbReference type="Rhea" id="RHEA:57720"/>
        <dbReference type="ChEBI" id="CHEBI:15377"/>
        <dbReference type="ChEBI" id="CHEBI:15378"/>
        <dbReference type="ChEBI" id="CHEBI:30616"/>
        <dbReference type="ChEBI" id="CHEBI:43474"/>
        <dbReference type="ChEBI" id="CHEBI:456216"/>
        <dbReference type="EC" id="7.1.2.2"/>
    </reaction>
</comment>
<comment type="subunit">
    <text evidence="1">F-type ATPases have 2 components, CF(1) - the catalytic core - and CF(0) - the membrane proton channel. CF(1) has five subunits: alpha(3), beta(3), gamma(1), delta(1), epsilon(1). CF(0) has three main subunits: a(1), b(2) and c(9-12). The alpha and beta chains form an alternating ring which encloses part of the gamma chain. CF(1) is attached to CF(0) by a central stalk formed by the gamma and epsilon chains, while a peripheral stalk is formed by the delta and b chains.</text>
</comment>
<comment type="subcellular location">
    <subcellularLocation>
        <location evidence="1">Cell inner membrane</location>
        <topology evidence="1">Peripheral membrane protein</topology>
    </subcellularLocation>
</comment>
<comment type="similarity">
    <text evidence="1">Belongs to the ATPase alpha/beta chains family.</text>
</comment>
<name>ATPB_LEGPH</name>
<organism>
    <name type="scientific">Legionella pneumophila subsp. pneumophila (strain Philadelphia 1 / ATCC 33152 / DSM 7513)</name>
    <dbReference type="NCBI Taxonomy" id="272624"/>
    <lineage>
        <taxon>Bacteria</taxon>
        <taxon>Pseudomonadati</taxon>
        <taxon>Pseudomonadota</taxon>
        <taxon>Gammaproteobacteria</taxon>
        <taxon>Legionellales</taxon>
        <taxon>Legionellaceae</taxon>
        <taxon>Legionella</taxon>
    </lineage>
</organism>
<accession>Q5ZRA1</accession>
<protein>
    <recommendedName>
        <fullName evidence="1">ATP synthase subunit beta</fullName>
        <ecNumber evidence="1">7.1.2.2</ecNumber>
    </recommendedName>
    <alternativeName>
        <fullName evidence="1">ATP synthase F1 sector subunit beta</fullName>
    </alternativeName>
    <alternativeName>
        <fullName evidence="1">F-ATPase subunit beta</fullName>
    </alternativeName>
</protein>
<feature type="chain" id="PRO_0000254287" description="ATP synthase subunit beta">
    <location>
        <begin position="1"/>
        <end position="458"/>
    </location>
</feature>
<feature type="binding site" evidence="1">
    <location>
        <begin position="148"/>
        <end position="155"/>
    </location>
    <ligand>
        <name>ATP</name>
        <dbReference type="ChEBI" id="CHEBI:30616"/>
    </ligand>
</feature>
<keyword id="KW-0066">ATP synthesis</keyword>
<keyword id="KW-0067">ATP-binding</keyword>
<keyword id="KW-0997">Cell inner membrane</keyword>
<keyword id="KW-1003">Cell membrane</keyword>
<keyword id="KW-0139">CF(1)</keyword>
<keyword id="KW-0375">Hydrogen ion transport</keyword>
<keyword id="KW-0406">Ion transport</keyword>
<keyword id="KW-0472">Membrane</keyword>
<keyword id="KW-0547">Nucleotide-binding</keyword>
<keyword id="KW-1185">Reference proteome</keyword>
<keyword id="KW-1278">Translocase</keyword>
<keyword id="KW-0813">Transport</keyword>
<sequence>MSLGTVVEVIGAVVDVEFPRDSVPKVNDALKLVDSDLVFEVQQQLGDGVVRTIAMGTTDGLKRGLKAENTGHPIQVPVGKKTLGRIMDVLGRPVDDAGPIDAEETWAIHRKAPSYEEQAGSQELLETGIKVIDLLCPFAKGGKVGLFGGAGVGKTVNMMELIRNIAIEHSGYSVFAGVGERTREGNDFYHEMKDSNVLDKVSLVYGQMNEPPGNRLRVALTGLTMAEKFRDEGRDVLLFIDNIYRYTLAGVEVSALLGRMPSAVGYQPTLAEEMGMLQERITSTKTGSITSIQAVYVPADDLTDPSPATTFAHLDATVVLSRQIAELGIYPAVDPLDSTSRQLDPLIVGQEHYDTARRVQQTLQRYKELKDIIAILGMDELSEEDKRVVTRARKIQRFLSQPFFVAEVFTGSPGKYVSLKDTIKGFQGILAGEYDDLPEQAFYMVGSIEEAVAKAKTL</sequence>
<evidence type="ECO:0000255" key="1">
    <source>
        <dbReference type="HAMAP-Rule" id="MF_01347"/>
    </source>
</evidence>
<gene>
    <name evidence="1" type="primary">atpD</name>
    <name type="ordered locus">lpg2982</name>
</gene>
<reference key="1">
    <citation type="journal article" date="2004" name="Science">
        <title>The genomic sequence of the accidental pathogen Legionella pneumophila.</title>
        <authorList>
            <person name="Chien M."/>
            <person name="Morozova I."/>
            <person name="Shi S."/>
            <person name="Sheng H."/>
            <person name="Chen J."/>
            <person name="Gomez S.M."/>
            <person name="Asamani G."/>
            <person name="Hill K."/>
            <person name="Nuara J."/>
            <person name="Feder M."/>
            <person name="Rineer J."/>
            <person name="Greenberg J.J."/>
            <person name="Steshenko V."/>
            <person name="Park S.H."/>
            <person name="Zhao B."/>
            <person name="Teplitskaya E."/>
            <person name="Edwards J.R."/>
            <person name="Pampou S."/>
            <person name="Georghiou A."/>
            <person name="Chou I.-C."/>
            <person name="Iannuccilli W."/>
            <person name="Ulz M.E."/>
            <person name="Kim D.H."/>
            <person name="Geringer-Sameth A."/>
            <person name="Goldsberry C."/>
            <person name="Morozov P."/>
            <person name="Fischer S.G."/>
            <person name="Segal G."/>
            <person name="Qu X."/>
            <person name="Rzhetsky A."/>
            <person name="Zhang P."/>
            <person name="Cayanis E."/>
            <person name="De Jong P.J."/>
            <person name="Ju J."/>
            <person name="Kalachikov S."/>
            <person name="Shuman H.A."/>
            <person name="Russo J.J."/>
        </authorList>
    </citation>
    <scope>NUCLEOTIDE SEQUENCE [LARGE SCALE GENOMIC DNA]</scope>
    <source>
        <strain>Philadelphia 1 / ATCC 33152 / DSM 7513</strain>
    </source>
</reference>